<reference key="1">
    <citation type="journal article" date="2004" name="Nat. Genet.">
        <title>Complete sequencing and characterization of 21,243 full-length human cDNAs.</title>
        <authorList>
            <person name="Ota T."/>
            <person name="Suzuki Y."/>
            <person name="Nishikawa T."/>
            <person name="Otsuki T."/>
            <person name="Sugiyama T."/>
            <person name="Irie R."/>
            <person name="Wakamatsu A."/>
            <person name="Hayashi K."/>
            <person name="Sato H."/>
            <person name="Nagai K."/>
            <person name="Kimura K."/>
            <person name="Makita H."/>
            <person name="Sekine M."/>
            <person name="Obayashi M."/>
            <person name="Nishi T."/>
            <person name="Shibahara T."/>
            <person name="Tanaka T."/>
            <person name="Ishii S."/>
            <person name="Yamamoto J."/>
            <person name="Saito K."/>
            <person name="Kawai Y."/>
            <person name="Isono Y."/>
            <person name="Nakamura Y."/>
            <person name="Nagahari K."/>
            <person name="Murakami K."/>
            <person name="Yasuda T."/>
            <person name="Iwayanagi T."/>
            <person name="Wagatsuma M."/>
            <person name="Shiratori A."/>
            <person name="Sudo H."/>
            <person name="Hosoiri T."/>
            <person name="Kaku Y."/>
            <person name="Kodaira H."/>
            <person name="Kondo H."/>
            <person name="Sugawara M."/>
            <person name="Takahashi M."/>
            <person name="Kanda K."/>
            <person name="Yokoi T."/>
            <person name="Furuya T."/>
            <person name="Kikkawa E."/>
            <person name="Omura Y."/>
            <person name="Abe K."/>
            <person name="Kamihara K."/>
            <person name="Katsuta N."/>
            <person name="Sato K."/>
            <person name="Tanikawa M."/>
            <person name="Yamazaki M."/>
            <person name="Ninomiya K."/>
            <person name="Ishibashi T."/>
            <person name="Yamashita H."/>
            <person name="Murakawa K."/>
            <person name="Fujimori K."/>
            <person name="Tanai H."/>
            <person name="Kimata M."/>
            <person name="Watanabe M."/>
            <person name="Hiraoka S."/>
            <person name="Chiba Y."/>
            <person name="Ishida S."/>
            <person name="Ono Y."/>
            <person name="Takiguchi S."/>
            <person name="Watanabe S."/>
            <person name="Yosida M."/>
            <person name="Hotuta T."/>
            <person name="Kusano J."/>
            <person name="Kanehori K."/>
            <person name="Takahashi-Fujii A."/>
            <person name="Hara H."/>
            <person name="Tanase T.-O."/>
            <person name="Nomura Y."/>
            <person name="Togiya S."/>
            <person name="Komai F."/>
            <person name="Hara R."/>
            <person name="Takeuchi K."/>
            <person name="Arita M."/>
            <person name="Imose N."/>
            <person name="Musashino K."/>
            <person name="Yuuki H."/>
            <person name="Oshima A."/>
            <person name="Sasaki N."/>
            <person name="Aotsuka S."/>
            <person name="Yoshikawa Y."/>
            <person name="Matsunawa H."/>
            <person name="Ichihara T."/>
            <person name="Shiohata N."/>
            <person name="Sano S."/>
            <person name="Moriya S."/>
            <person name="Momiyama H."/>
            <person name="Satoh N."/>
            <person name="Takami S."/>
            <person name="Terashima Y."/>
            <person name="Suzuki O."/>
            <person name="Nakagawa S."/>
            <person name="Senoh A."/>
            <person name="Mizoguchi H."/>
            <person name="Goto Y."/>
            <person name="Shimizu F."/>
            <person name="Wakebe H."/>
            <person name="Hishigaki H."/>
            <person name="Watanabe T."/>
            <person name="Sugiyama A."/>
            <person name="Takemoto M."/>
            <person name="Kawakami B."/>
            <person name="Yamazaki M."/>
            <person name="Watanabe K."/>
            <person name="Kumagai A."/>
            <person name="Itakura S."/>
            <person name="Fukuzumi Y."/>
            <person name="Fujimori Y."/>
            <person name="Komiyama M."/>
            <person name="Tashiro H."/>
            <person name="Tanigami A."/>
            <person name="Fujiwara T."/>
            <person name="Ono T."/>
            <person name="Yamada K."/>
            <person name="Fujii Y."/>
            <person name="Ozaki K."/>
            <person name="Hirao M."/>
            <person name="Ohmori Y."/>
            <person name="Kawabata A."/>
            <person name="Hikiji T."/>
            <person name="Kobatake N."/>
            <person name="Inagaki H."/>
            <person name="Ikema Y."/>
            <person name="Okamoto S."/>
            <person name="Okitani R."/>
            <person name="Kawakami T."/>
            <person name="Noguchi S."/>
            <person name="Itoh T."/>
            <person name="Shigeta K."/>
            <person name="Senba T."/>
            <person name="Matsumura K."/>
            <person name="Nakajima Y."/>
            <person name="Mizuno T."/>
            <person name="Morinaga M."/>
            <person name="Sasaki M."/>
            <person name="Togashi T."/>
            <person name="Oyama M."/>
            <person name="Hata H."/>
            <person name="Watanabe M."/>
            <person name="Komatsu T."/>
            <person name="Mizushima-Sugano J."/>
            <person name="Satoh T."/>
            <person name="Shirai Y."/>
            <person name="Takahashi Y."/>
            <person name="Nakagawa K."/>
            <person name="Okumura K."/>
            <person name="Nagase T."/>
            <person name="Nomura N."/>
            <person name="Kikuchi H."/>
            <person name="Masuho Y."/>
            <person name="Yamashita R."/>
            <person name="Nakai K."/>
            <person name="Yada T."/>
            <person name="Nakamura Y."/>
            <person name="Ohara O."/>
            <person name="Isogai T."/>
            <person name="Sugano S."/>
        </authorList>
    </citation>
    <scope>NUCLEOTIDE SEQUENCE [LARGE SCALE MRNA]</scope>
    <scope>VARIANT PHE-2</scope>
</reference>
<reference key="2">
    <citation type="journal article" date="2003" name="Nature">
        <title>The DNA sequence and analysis of human chromosome 6.</title>
        <authorList>
            <person name="Mungall A.J."/>
            <person name="Palmer S.A."/>
            <person name="Sims S.K."/>
            <person name="Edwards C.A."/>
            <person name="Ashurst J.L."/>
            <person name="Wilming L."/>
            <person name="Jones M.C."/>
            <person name="Horton R."/>
            <person name="Hunt S.E."/>
            <person name="Scott C.E."/>
            <person name="Gilbert J.G.R."/>
            <person name="Clamp M.E."/>
            <person name="Bethel G."/>
            <person name="Milne S."/>
            <person name="Ainscough R."/>
            <person name="Almeida J.P."/>
            <person name="Ambrose K.D."/>
            <person name="Andrews T.D."/>
            <person name="Ashwell R.I.S."/>
            <person name="Babbage A.K."/>
            <person name="Bagguley C.L."/>
            <person name="Bailey J."/>
            <person name="Banerjee R."/>
            <person name="Barker D.J."/>
            <person name="Barlow K.F."/>
            <person name="Bates K."/>
            <person name="Beare D.M."/>
            <person name="Beasley H."/>
            <person name="Beasley O."/>
            <person name="Bird C.P."/>
            <person name="Blakey S.E."/>
            <person name="Bray-Allen S."/>
            <person name="Brook J."/>
            <person name="Brown A.J."/>
            <person name="Brown J.Y."/>
            <person name="Burford D.C."/>
            <person name="Burrill W."/>
            <person name="Burton J."/>
            <person name="Carder C."/>
            <person name="Carter N.P."/>
            <person name="Chapman J.C."/>
            <person name="Clark S.Y."/>
            <person name="Clark G."/>
            <person name="Clee C.M."/>
            <person name="Clegg S."/>
            <person name="Cobley V."/>
            <person name="Collier R.E."/>
            <person name="Collins J.E."/>
            <person name="Colman L.K."/>
            <person name="Corby N.R."/>
            <person name="Coville G.J."/>
            <person name="Culley K.M."/>
            <person name="Dhami P."/>
            <person name="Davies J."/>
            <person name="Dunn M."/>
            <person name="Earthrowl M.E."/>
            <person name="Ellington A.E."/>
            <person name="Evans K.A."/>
            <person name="Faulkner L."/>
            <person name="Francis M.D."/>
            <person name="Frankish A."/>
            <person name="Frankland J."/>
            <person name="French L."/>
            <person name="Garner P."/>
            <person name="Garnett J."/>
            <person name="Ghori M.J."/>
            <person name="Gilby L.M."/>
            <person name="Gillson C.J."/>
            <person name="Glithero R.J."/>
            <person name="Grafham D.V."/>
            <person name="Grant M."/>
            <person name="Gribble S."/>
            <person name="Griffiths C."/>
            <person name="Griffiths M.N.D."/>
            <person name="Hall R."/>
            <person name="Halls K.S."/>
            <person name="Hammond S."/>
            <person name="Harley J.L."/>
            <person name="Hart E.A."/>
            <person name="Heath P.D."/>
            <person name="Heathcott R."/>
            <person name="Holmes S.J."/>
            <person name="Howden P.J."/>
            <person name="Howe K.L."/>
            <person name="Howell G.R."/>
            <person name="Huckle E."/>
            <person name="Humphray S.J."/>
            <person name="Humphries M.D."/>
            <person name="Hunt A.R."/>
            <person name="Johnson C.M."/>
            <person name="Joy A.A."/>
            <person name="Kay M."/>
            <person name="Keenan S.J."/>
            <person name="Kimberley A.M."/>
            <person name="King A."/>
            <person name="Laird G.K."/>
            <person name="Langford C."/>
            <person name="Lawlor S."/>
            <person name="Leongamornlert D.A."/>
            <person name="Leversha M."/>
            <person name="Lloyd C.R."/>
            <person name="Lloyd D.M."/>
            <person name="Loveland J.E."/>
            <person name="Lovell J."/>
            <person name="Martin S."/>
            <person name="Mashreghi-Mohammadi M."/>
            <person name="Maslen G.L."/>
            <person name="Matthews L."/>
            <person name="McCann O.T."/>
            <person name="McLaren S.J."/>
            <person name="McLay K."/>
            <person name="McMurray A."/>
            <person name="Moore M.J.F."/>
            <person name="Mullikin J.C."/>
            <person name="Niblett D."/>
            <person name="Nickerson T."/>
            <person name="Novik K.L."/>
            <person name="Oliver K."/>
            <person name="Overton-Larty E.K."/>
            <person name="Parker A."/>
            <person name="Patel R."/>
            <person name="Pearce A.V."/>
            <person name="Peck A.I."/>
            <person name="Phillimore B.J.C.T."/>
            <person name="Phillips S."/>
            <person name="Plumb R.W."/>
            <person name="Porter K.M."/>
            <person name="Ramsey Y."/>
            <person name="Ranby S.A."/>
            <person name="Rice C.M."/>
            <person name="Ross M.T."/>
            <person name="Searle S.M."/>
            <person name="Sehra H.K."/>
            <person name="Sheridan E."/>
            <person name="Skuce C.D."/>
            <person name="Smith S."/>
            <person name="Smith M."/>
            <person name="Spraggon L."/>
            <person name="Squares S.L."/>
            <person name="Steward C.A."/>
            <person name="Sycamore N."/>
            <person name="Tamlyn-Hall G."/>
            <person name="Tester J."/>
            <person name="Theaker A.J."/>
            <person name="Thomas D.W."/>
            <person name="Thorpe A."/>
            <person name="Tracey A."/>
            <person name="Tromans A."/>
            <person name="Tubby B."/>
            <person name="Wall M."/>
            <person name="Wallis J.M."/>
            <person name="West A.P."/>
            <person name="White S.S."/>
            <person name="Whitehead S.L."/>
            <person name="Whittaker H."/>
            <person name="Wild A."/>
            <person name="Willey D.J."/>
            <person name="Wilmer T.E."/>
            <person name="Wood J.M."/>
            <person name="Wray P.W."/>
            <person name="Wyatt J.C."/>
            <person name="Young L."/>
            <person name="Younger R.M."/>
            <person name="Bentley D.R."/>
            <person name="Coulson A."/>
            <person name="Durbin R.M."/>
            <person name="Hubbard T."/>
            <person name="Sulston J.E."/>
            <person name="Dunham I."/>
            <person name="Rogers J."/>
            <person name="Beck S."/>
        </authorList>
    </citation>
    <scope>NUCLEOTIDE SEQUENCE [LARGE SCALE GENOMIC DNA]</scope>
</reference>
<reference key="3">
    <citation type="journal article" date="2004" name="Genome Res.">
        <title>The status, quality, and expansion of the NIH full-length cDNA project: the Mammalian Gene Collection (MGC).</title>
        <authorList>
            <consortium name="The MGC Project Team"/>
        </authorList>
    </citation>
    <scope>NUCLEOTIDE SEQUENCE [LARGE SCALE MRNA]</scope>
    <scope>VARIANTS PHE-2 AND SER-43</scope>
</reference>
<sequence>MIYPLDLFRNIPWKQGKCFASLSPEGERAFDGMEPLCQPGARPALRGLQHASDCYRLLSPPGSGLVGTNPSVPAPSPHCGCCQAWSISSFTFTGPTPFKINSDQATPCHLRSPETIFRQREISNEAF</sequence>
<name>CF195_HUMAN</name>
<organism>
    <name type="scientific">Homo sapiens</name>
    <name type="common">Human</name>
    <dbReference type="NCBI Taxonomy" id="9606"/>
    <lineage>
        <taxon>Eukaryota</taxon>
        <taxon>Metazoa</taxon>
        <taxon>Chordata</taxon>
        <taxon>Craniata</taxon>
        <taxon>Vertebrata</taxon>
        <taxon>Euteleostomi</taxon>
        <taxon>Mammalia</taxon>
        <taxon>Eutheria</taxon>
        <taxon>Euarchontoglires</taxon>
        <taxon>Primates</taxon>
        <taxon>Haplorrhini</taxon>
        <taxon>Catarrhini</taxon>
        <taxon>Hominidae</taxon>
        <taxon>Homo</taxon>
    </lineage>
</organism>
<gene>
    <name evidence="4" type="primary">LINC01600</name>
    <name evidence="4" type="synonym">C6orf195</name>
</gene>
<proteinExistence type="evidence at transcript level"/>
<keyword id="KW-1185">Reference proteome</keyword>
<dbReference type="EMBL" id="AK056496">
    <property type="protein sequence ID" value="BAB71197.1"/>
    <property type="molecule type" value="mRNA"/>
</dbReference>
<dbReference type="EMBL" id="AL138876">
    <property type="status" value="NOT_ANNOTATED_CDS"/>
    <property type="molecule type" value="Genomic_DNA"/>
</dbReference>
<dbReference type="EMBL" id="BC104007">
    <property type="protein sequence ID" value="AAI04008.1"/>
    <property type="molecule type" value="mRNA"/>
</dbReference>
<dbReference type="EMBL" id="BC104008">
    <property type="protein sequence ID" value="AAI04009.1"/>
    <property type="molecule type" value="mRNA"/>
</dbReference>
<dbReference type="EMBL" id="BC104009">
    <property type="protein sequence ID" value="AAI04010.1"/>
    <property type="molecule type" value="mRNA"/>
</dbReference>
<dbReference type="BioGRID" id="127545">
    <property type="interactions" value="2"/>
</dbReference>
<dbReference type="IntAct" id="Q96MT4">
    <property type="interactions" value="1"/>
</dbReference>
<dbReference type="iPTMnet" id="Q96MT4"/>
<dbReference type="PhosphoSitePlus" id="Q96MT4"/>
<dbReference type="BioMuta" id="HGNC:21600"/>
<dbReference type="PaxDb" id="9606-ENSP00000296847"/>
<dbReference type="ProteomicsDB" id="77403"/>
<dbReference type="UCSC" id="uc003mtw.2">
    <property type="organism name" value="human"/>
</dbReference>
<dbReference type="AGR" id="HGNC:21600"/>
<dbReference type="GeneCards" id="LINC01600"/>
<dbReference type="HGNC" id="HGNC:21600">
    <property type="gene designation" value="LINC01600"/>
</dbReference>
<dbReference type="neXtProt" id="NX_Q96MT4"/>
<dbReference type="eggNOG" id="ENOG502TM2Z">
    <property type="taxonomic scope" value="Eukaryota"/>
</dbReference>
<dbReference type="InParanoid" id="Q96MT4"/>
<dbReference type="PAN-GO" id="Q96MT4">
    <property type="GO annotations" value="0 GO annotations based on evolutionary models"/>
</dbReference>
<dbReference type="PhylomeDB" id="Q96MT4"/>
<dbReference type="PathwayCommons" id="Q96MT4"/>
<dbReference type="Pharos" id="Q96MT4">
    <property type="development level" value="Tdark"/>
</dbReference>
<dbReference type="PRO" id="PR:Q96MT4"/>
<dbReference type="Proteomes" id="UP000005640">
    <property type="component" value="Unplaced"/>
</dbReference>
<dbReference type="RNAct" id="Q96MT4">
    <property type="molecule type" value="protein"/>
</dbReference>
<feature type="chain" id="PRO_0000089558" description="Uncharacterized protein encoded by LINC01600">
    <location>
        <begin position="1"/>
        <end position="127"/>
    </location>
</feature>
<feature type="sequence variant" id="VAR_050813" description="In dbSNP:rs17135340." evidence="1 2">
    <original>I</original>
    <variation>F</variation>
    <location>
        <position position="2"/>
    </location>
</feature>
<feature type="sequence variant" id="VAR_050814" description="In dbSNP:rs9503233." evidence="2">
    <original>P</original>
    <variation>S</variation>
    <location>
        <position position="43"/>
    </location>
</feature>
<feature type="sequence conflict" description="In Ref. 1; BAB71197." evidence="3" ref="1">
    <original>Q</original>
    <variation>R</variation>
    <location>
        <position position="83"/>
    </location>
</feature>
<feature type="sequence conflict" description="In Ref. 1; BAB71197." evidence="3" ref="1">
    <original>F</original>
    <variation>S</variation>
    <location>
        <position position="117"/>
    </location>
</feature>
<evidence type="ECO:0000269" key="1">
    <source>
    </source>
</evidence>
<evidence type="ECO:0000269" key="2">
    <source>
    </source>
</evidence>
<evidence type="ECO:0000305" key="3"/>
<evidence type="ECO:0000312" key="4">
    <source>
        <dbReference type="HGNC" id="HGNC:21600"/>
    </source>
</evidence>
<protein>
    <recommendedName>
        <fullName evidence="4">Uncharacterized protein encoded by LINC01600</fullName>
    </recommendedName>
</protein>
<accession>Q96MT4</accession>
<accession>Q3SY08</accession>
<accession>Q3SY09</accession>
<accession>Q3SY10</accession>
<accession>Q5TAW4</accession>